<gene>
    <name evidence="1" type="primary">argC</name>
    <name type="ordered locus">OB1075</name>
</gene>
<feature type="chain" id="PRO_0000112431" description="N-acetyl-gamma-glutamyl-phosphate reductase">
    <location>
        <begin position="1"/>
        <end position="346"/>
    </location>
</feature>
<feature type="active site" evidence="1">
    <location>
        <position position="149"/>
    </location>
</feature>
<proteinExistence type="inferred from homology"/>
<sequence length="346" mass="38252">MKKAAIIGGTGYGAIELIRLLDSHPYIELAKIISQSQHGELLDETYPHLATYVTQPMQELHIQQLIEEIDIVFLATPAGVAKEIAASFLDSSIQCIDLSGDLRLSSSDYEMWYQKKPASEALLEKTAYGLTEVFQEKIKQANIISNPGCFPTAALLGLIPMLENNIIESKGIMIDGKTGISGAGKNSSAKTHFSTTNENVTPYKIGTHQHIPEIEKYLSQHVEESSVRVTLTTHLIPMTRGLMCTMYAPLQQDIDTADVIDLYKHYYEQSSFIRIRKQGEYPSTKDVTGSNYCDIGAYVDKRTNQLIISSAIDNLVKGAAGQAIQNINVMNGWDEKTGLSFLPVYP</sequence>
<accession>Q8CUN2</accession>
<keyword id="KW-0028">Amino-acid biosynthesis</keyword>
<keyword id="KW-0055">Arginine biosynthesis</keyword>
<keyword id="KW-0963">Cytoplasm</keyword>
<keyword id="KW-0521">NADP</keyword>
<keyword id="KW-0560">Oxidoreductase</keyword>
<keyword id="KW-1185">Reference proteome</keyword>
<comment type="function">
    <text evidence="1">Catalyzes the NADPH-dependent reduction of N-acetyl-5-glutamyl phosphate to yield N-acetyl-L-glutamate 5-semialdehyde.</text>
</comment>
<comment type="catalytic activity">
    <reaction evidence="1">
        <text>N-acetyl-L-glutamate 5-semialdehyde + phosphate + NADP(+) = N-acetyl-L-glutamyl 5-phosphate + NADPH + H(+)</text>
        <dbReference type="Rhea" id="RHEA:21588"/>
        <dbReference type="ChEBI" id="CHEBI:15378"/>
        <dbReference type="ChEBI" id="CHEBI:29123"/>
        <dbReference type="ChEBI" id="CHEBI:43474"/>
        <dbReference type="ChEBI" id="CHEBI:57783"/>
        <dbReference type="ChEBI" id="CHEBI:57936"/>
        <dbReference type="ChEBI" id="CHEBI:58349"/>
        <dbReference type="EC" id="1.2.1.38"/>
    </reaction>
</comment>
<comment type="pathway">
    <text evidence="1">Amino-acid biosynthesis; L-arginine biosynthesis; N(2)-acetyl-L-ornithine from L-glutamate: step 3/4.</text>
</comment>
<comment type="subcellular location">
    <subcellularLocation>
        <location evidence="1">Cytoplasm</location>
    </subcellularLocation>
</comment>
<comment type="similarity">
    <text evidence="1">Belongs to the NAGSA dehydrogenase family. Type 1 subfamily.</text>
</comment>
<name>ARGC_OCEIH</name>
<evidence type="ECO:0000255" key="1">
    <source>
        <dbReference type="HAMAP-Rule" id="MF_00150"/>
    </source>
</evidence>
<reference key="1">
    <citation type="journal article" date="2002" name="Nucleic Acids Res.">
        <title>Genome sequence of Oceanobacillus iheyensis isolated from the Iheya Ridge and its unexpected adaptive capabilities to extreme environments.</title>
        <authorList>
            <person name="Takami H."/>
            <person name="Takaki Y."/>
            <person name="Uchiyama I."/>
        </authorList>
    </citation>
    <scope>NUCLEOTIDE SEQUENCE [LARGE SCALE GENOMIC DNA]</scope>
    <source>
        <strain>DSM 14371 / CIP 107618 / JCM 11309 / KCTC 3954 / HTE831</strain>
    </source>
</reference>
<dbReference type="EC" id="1.2.1.38" evidence="1"/>
<dbReference type="EMBL" id="BA000028">
    <property type="protein sequence ID" value="BAC13031.1"/>
    <property type="molecule type" value="Genomic_DNA"/>
</dbReference>
<dbReference type="RefSeq" id="WP_011065476.1">
    <property type="nucleotide sequence ID" value="NC_004193.1"/>
</dbReference>
<dbReference type="SMR" id="Q8CUN2"/>
<dbReference type="STRING" id="221109.gene:10733313"/>
<dbReference type="KEGG" id="oih:OB1075"/>
<dbReference type="eggNOG" id="COG0002">
    <property type="taxonomic scope" value="Bacteria"/>
</dbReference>
<dbReference type="HOGENOM" id="CLU_006384_0_1_9"/>
<dbReference type="OrthoDB" id="9801289at2"/>
<dbReference type="PhylomeDB" id="Q8CUN2"/>
<dbReference type="UniPathway" id="UPA00068">
    <property type="reaction ID" value="UER00108"/>
</dbReference>
<dbReference type="Proteomes" id="UP000000822">
    <property type="component" value="Chromosome"/>
</dbReference>
<dbReference type="GO" id="GO:0005737">
    <property type="term" value="C:cytoplasm"/>
    <property type="evidence" value="ECO:0007669"/>
    <property type="project" value="UniProtKB-SubCell"/>
</dbReference>
<dbReference type="GO" id="GO:0003942">
    <property type="term" value="F:N-acetyl-gamma-glutamyl-phosphate reductase activity"/>
    <property type="evidence" value="ECO:0007669"/>
    <property type="project" value="UniProtKB-UniRule"/>
</dbReference>
<dbReference type="GO" id="GO:0051287">
    <property type="term" value="F:NAD binding"/>
    <property type="evidence" value="ECO:0007669"/>
    <property type="project" value="InterPro"/>
</dbReference>
<dbReference type="GO" id="GO:0070401">
    <property type="term" value="F:NADP+ binding"/>
    <property type="evidence" value="ECO:0007669"/>
    <property type="project" value="InterPro"/>
</dbReference>
<dbReference type="GO" id="GO:0006526">
    <property type="term" value="P:L-arginine biosynthetic process"/>
    <property type="evidence" value="ECO:0007669"/>
    <property type="project" value="UniProtKB-UniRule"/>
</dbReference>
<dbReference type="CDD" id="cd23934">
    <property type="entry name" value="AGPR_1_C"/>
    <property type="match status" value="1"/>
</dbReference>
<dbReference type="CDD" id="cd17895">
    <property type="entry name" value="AGPR_1_N"/>
    <property type="match status" value="1"/>
</dbReference>
<dbReference type="FunFam" id="3.30.360.10:FF:000014">
    <property type="entry name" value="N-acetyl-gamma-glutamyl-phosphate reductase"/>
    <property type="match status" value="1"/>
</dbReference>
<dbReference type="Gene3D" id="3.30.360.10">
    <property type="entry name" value="Dihydrodipicolinate Reductase, domain 2"/>
    <property type="match status" value="1"/>
</dbReference>
<dbReference type="Gene3D" id="3.40.50.720">
    <property type="entry name" value="NAD(P)-binding Rossmann-like Domain"/>
    <property type="match status" value="1"/>
</dbReference>
<dbReference type="HAMAP" id="MF_00150">
    <property type="entry name" value="ArgC_type1"/>
    <property type="match status" value="1"/>
</dbReference>
<dbReference type="InterPro" id="IPR023013">
    <property type="entry name" value="AGPR_AS"/>
</dbReference>
<dbReference type="InterPro" id="IPR000706">
    <property type="entry name" value="AGPR_type-1"/>
</dbReference>
<dbReference type="InterPro" id="IPR036291">
    <property type="entry name" value="NAD(P)-bd_dom_sf"/>
</dbReference>
<dbReference type="InterPro" id="IPR050085">
    <property type="entry name" value="NAGSA_dehydrogenase"/>
</dbReference>
<dbReference type="InterPro" id="IPR000534">
    <property type="entry name" value="Semialdehyde_DH_NAD-bd"/>
</dbReference>
<dbReference type="NCBIfam" id="TIGR01850">
    <property type="entry name" value="argC"/>
    <property type="match status" value="1"/>
</dbReference>
<dbReference type="PANTHER" id="PTHR32338:SF10">
    <property type="entry name" value="N-ACETYL-GAMMA-GLUTAMYL-PHOSPHATE REDUCTASE, CHLOROPLASTIC-RELATED"/>
    <property type="match status" value="1"/>
</dbReference>
<dbReference type="PANTHER" id="PTHR32338">
    <property type="entry name" value="N-ACETYL-GAMMA-GLUTAMYL-PHOSPHATE REDUCTASE, CHLOROPLASTIC-RELATED-RELATED"/>
    <property type="match status" value="1"/>
</dbReference>
<dbReference type="Pfam" id="PF01118">
    <property type="entry name" value="Semialdhyde_dh"/>
    <property type="match status" value="1"/>
</dbReference>
<dbReference type="Pfam" id="PF22698">
    <property type="entry name" value="Semialdhyde_dhC_1"/>
    <property type="match status" value="1"/>
</dbReference>
<dbReference type="SMART" id="SM00859">
    <property type="entry name" value="Semialdhyde_dh"/>
    <property type="match status" value="1"/>
</dbReference>
<dbReference type="SUPFAM" id="SSF55347">
    <property type="entry name" value="Glyceraldehyde-3-phosphate dehydrogenase-like, C-terminal domain"/>
    <property type="match status" value="1"/>
</dbReference>
<dbReference type="SUPFAM" id="SSF51735">
    <property type="entry name" value="NAD(P)-binding Rossmann-fold domains"/>
    <property type="match status" value="1"/>
</dbReference>
<dbReference type="PROSITE" id="PS01224">
    <property type="entry name" value="ARGC"/>
    <property type="match status" value="1"/>
</dbReference>
<protein>
    <recommendedName>
        <fullName evidence="1">N-acetyl-gamma-glutamyl-phosphate reductase</fullName>
        <shortName evidence="1">AGPR</shortName>
        <ecNumber evidence="1">1.2.1.38</ecNumber>
    </recommendedName>
    <alternativeName>
        <fullName evidence="1">N-acetyl-glutamate semialdehyde dehydrogenase</fullName>
        <shortName evidence="1">NAGSA dehydrogenase</shortName>
    </alternativeName>
</protein>
<organism>
    <name type="scientific">Oceanobacillus iheyensis (strain DSM 14371 / CIP 107618 / JCM 11309 / KCTC 3954 / HTE831)</name>
    <dbReference type="NCBI Taxonomy" id="221109"/>
    <lineage>
        <taxon>Bacteria</taxon>
        <taxon>Bacillati</taxon>
        <taxon>Bacillota</taxon>
        <taxon>Bacilli</taxon>
        <taxon>Bacillales</taxon>
        <taxon>Bacillaceae</taxon>
        <taxon>Oceanobacillus</taxon>
    </lineage>
</organism>